<reference key="1">
    <citation type="journal article" date="2007" name="PLoS Genet.">
        <title>Patterns and implications of gene gain and loss in the evolution of Prochlorococcus.</title>
        <authorList>
            <person name="Kettler G.C."/>
            <person name="Martiny A.C."/>
            <person name="Huang K."/>
            <person name="Zucker J."/>
            <person name="Coleman M.L."/>
            <person name="Rodrigue S."/>
            <person name="Chen F."/>
            <person name="Lapidus A."/>
            <person name="Ferriera S."/>
            <person name="Johnson J."/>
            <person name="Steglich C."/>
            <person name="Church G.M."/>
            <person name="Richardson P."/>
            <person name="Chisholm S.W."/>
        </authorList>
    </citation>
    <scope>NUCLEOTIDE SEQUENCE [LARGE SCALE GENOMIC DNA]</scope>
    <source>
        <strain>MIT 9301</strain>
    </source>
</reference>
<protein>
    <recommendedName>
        <fullName evidence="1">Phosphoribosylformylglycinamidine cyclo-ligase</fullName>
        <ecNumber evidence="1">6.3.3.1</ecNumber>
    </recommendedName>
    <alternativeName>
        <fullName evidence="1">AIR synthase</fullName>
    </alternativeName>
    <alternativeName>
        <fullName evidence="1">AIRS</fullName>
    </alternativeName>
    <alternativeName>
        <fullName evidence="1">Phosphoribosyl-aminoimidazole synthetase</fullName>
    </alternativeName>
</protein>
<dbReference type="EC" id="6.3.3.1" evidence="1"/>
<dbReference type="EMBL" id="CP000576">
    <property type="protein sequence ID" value="ABO18404.1"/>
    <property type="molecule type" value="Genomic_DNA"/>
</dbReference>
<dbReference type="RefSeq" id="WP_011863692.1">
    <property type="nucleotide sequence ID" value="NC_009091.1"/>
</dbReference>
<dbReference type="SMR" id="A3PF79"/>
<dbReference type="STRING" id="167546.P9301_17811"/>
<dbReference type="KEGG" id="pmg:P9301_17811"/>
<dbReference type="eggNOG" id="COG0150">
    <property type="taxonomic scope" value="Bacteria"/>
</dbReference>
<dbReference type="HOGENOM" id="CLU_047116_0_0_3"/>
<dbReference type="OrthoDB" id="9802507at2"/>
<dbReference type="UniPathway" id="UPA00074">
    <property type="reaction ID" value="UER00129"/>
</dbReference>
<dbReference type="Proteomes" id="UP000001430">
    <property type="component" value="Chromosome"/>
</dbReference>
<dbReference type="GO" id="GO:0005829">
    <property type="term" value="C:cytosol"/>
    <property type="evidence" value="ECO:0007669"/>
    <property type="project" value="TreeGrafter"/>
</dbReference>
<dbReference type="GO" id="GO:0005524">
    <property type="term" value="F:ATP binding"/>
    <property type="evidence" value="ECO:0007669"/>
    <property type="project" value="UniProtKB-KW"/>
</dbReference>
<dbReference type="GO" id="GO:0004637">
    <property type="term" value="F:phosphoribosylamine-glycine ligase activity"/>
    <property type="evidence" value="ECO:0007669"/>
    <property type="project" value="TreeGrafter"/>
</dbReference>
<dbReference type="GO" id="GO:0004641">
    <property type="term" value="F:phosphoribosylformylglycinamidine cyclo-ligase activity"/>
    <property type="evidence" value="ECO:0007669"/>
    <property type="project" value="UniProtKB-UniRule"/>
</dbReference>
<dbReference type="GO" id="GO:0006189">
    <property type="term" value="P:'de novo' IMP biosynthetic process"/>
    <property type="evidence" value="ECO:0007669"/>
    <property type="project" value="UniProtKB-UniRule"/>
</dbReference>
<dbReference type="GO" id="GO:0046084">
    <property type="term" value="P:adenine biosynthetic process"/>
    <property type="evidence" value="ECO:0007669"/>
    <property type="project" value="TreeGrafter"/>
</dbReference>
<dbReference type="CDD" id="cd02196">
    <property type="entry name" value="PurM"/>
    <property type="match status" value="1"/>
</dbReference>
<dbReference type="FunFam" id="3.30.1330.10:FF:000001">
    <property type="entry name" value="Phosphoribosylformylglycinamidine cyclo-ligase"/>
    <property type="match status" value="1"/>
</dbReference>
<dbReference type="FunFam" id="3.90.650.10:FF:000011">
    <property type="entry name" value="Phosphoribosylformylglycinamidine cyclo-ligase"/>
    <property type="match status" value="1"/>
</dbReference>
<dbReference type="Gene3D" id="3.90.650.10">
    <property type="entry name" value="PurM-like C-terminal domain"/>
    <property type="match status" value="1"/>
</dbReference>
<dbReference type="Gene3D" id="3.30.1330.10">
    <property type="entry name" value="PurM-like, N-terminal domain"/>
    <property type="match status" value="1"/>
</dbReference>
<dbReference type="HAMAP" id="MF_00741">
    <property type="entry name" value="AIRS"/>
    <property type="match status" value="1"/>
</dbReference>
<dbReference type="InterPro" id="IPR010918">
    <property type="entry name" value="PurM-like_C_dom"/>
</dbReference>
<dbReference type="InterPro" id="IPR036676">
    <property type="entry name" value="PurM-like_C_sf"/>
</dbReference>
<dbReference type="InterPro" id="IPR016188">
    <property type="entry name" value="PurM-like_N"/>
</dbReference>
<dbReference type="InterPro" id="IPR036921">
    <property type="entry name" value="PurM-like_N_sf"/>
</dbReference>
<dbReference type="InterPro" id="IPR004733">
    <property type="entry name" value="PurM_cligase"/>
</dbReference>
<dbReference type="NCBIfam" id="TIGR00878">
    <property type="entry name" value="purM"/>
    <property type="match status" value="1"/>
</dbReference>
<dbReference type="PANTHER" id="PTHR10520:SF12">
    <property type="entry name" value="TRIFUNCTIONAL PURINE BIOSYNTHETIC PROTEIN ADENOSINE-3"/>
    <property type="match status" value="1"/>
</dbReference>
<dbReference type="PANTHER" id="PTHR10520">
    <property type="entry name" value="TRIFUNCTIONAL PURINE BIOSYNTHETIC PROTEIN ADENOSINE-3-RELATED"/>
    <property type="match status" value="1"/>
</dbReference>
<dbReference type="Pfam" id="PF00586">
    <property type="entry name" value="AIRS"/>
    <property type="match status" value="1"/>
</dbReference>
<dbReference type="Pfam" id="PF02769">
    <property type="entry name" value="AIRS_C"/>
    <property type="match status" value="1"/>
</dbReference>
<dbReference type="SUPFAM" id="SSF56042">
    <property type="entry name" value="PurM C-terminal domain-like"/>
    <property type="match status" value="1"/>
</dbReference>
<dbReference type="SUPFAM" id="SSF55326">
    <property type="entry name" value="PurM N-terminal domain-like"/>
    <property type="match status" value="1"/>
</dbReference>
<comment type="catalytic activity">
    <reaction evidence="1">
        <text>2-formamido-N(1)-(5-O-phospho-beta-D-ribosyl)acetamidine + ATP = 5-amino-1-(5-phospho-beta-D-ribosyl)imidazole + ADP + phosphate + H(+)</text>
        <dbReference type="Rhea" id="RHEA:23032"/>
        <dbReference type="ChEBI" id="CHEBI:15378"/>
        <dbReference type="ChEBI" id="CHEBI:30616"/>
        <dbReference type="ChEBI" id="CHEBI:43474"/>
        <dbReference type="ChEBI" id="CHEBI:137981"/>
        <dbReference type="ChEBI" id="CHEBI:147287"/>
        <dbReference type="ChEBI" id="CHEBI:456216"/>
        <dbReference type="EC" id="6.3.3.1"/>
    </reaction>
</comment>
<comment type="pathway">
    <text evidence="1">Purine metabolism; IMP biosynthesis via de novo pathway; 5-amino-1-(5-phospho-D-ribosyl)imidazole from N(2)-formyl-N(1)-(5-phospho-D-ribosyl)glycinamide: step 2/2.</text>
</comment>
<comment type="subcellular location">
    <subcellularLocation>
        <location evidence="1">Cytoplasm</location>
    </subcellularLocation>
</comment>
<comment type="similarity">
    <text evidence="1">Belongs to the AIR synthase family.</text>
</comment>
<organism>
    <name type="scientific">Prochlorococcus marinus (strain MIT 9301)</name>
    <dbReference type="NCBI Taxonomy" id="167546"/>
    <lineage>
        <taxon>Bacteria</taxon>
        <taxon>Bacillati</taxon>
        <taxon>Cyanobacteriota</taxon>
        <taxon>Cyanophyceae</taxon>
        <taxon>Synechococcales</taxon>
        <taxon>Prochlorococcaceae</taxon>
        <taxon>Prochlorococcus</taxon>
    </lineage>
</organism>
<keyword id="KW-0067">ATP-binding</keyword>
<keyword id="KW-0963">Cytoplasm</keyword>
<keyword id="KW-0436">Ligase</keyword>
<keyword id="KW-0547">Nucleotide-binding</keyword>
<keyword id="KW-0658">Purine biosynthesis</keyword>
<keyword id="KW-1185">Reference proteome</keyword>
<sequence length="347" mass="38537">MDYKTSGVDIEAGREFVSEIKQAVEATHTSNVIEGIGGFGGLFRIPIDSFKKPVLVSGTDGVGTKLELAQSKNFHFEVGIDLVAMCMNDIITSGARPLFFLDYIATGKLDKKQLLRVVQGISHGCGENNCSLLGGETAEMPGFYSKNKYDLAGFCVGIVDEDKLINGKKVSENDLIIALKSNGVHSNGFSLVRKIIQNNNQIDKEFEKVSHLNFYDELLKPTKIYNNVINQMLSEDIEIKAMSHITGGGIPENLPRCIPSDFIPYINTSSWQIPTLFKFLKEKGSIPERDFWNTFNLGVGFCLIIDKQFKDAILSICKDYGIDSWEIGKIVRKNDSTISKFLPEILT</sequence>
<proteinExistence type="inferred from homology"/>
<gene>
    <name evidence="1" type="primary">purM</name>
    <name type="ordered locus">P9301_17811</name>
</gene>
<accession>A3PF79</accession>
<name>PUR5_PROM0</name>
<feature type="chain" id="PRO_1000046453" description="Phosphoribosylformylglycinamidine cyclo-ligase">
    <location>
        <begin position="1"/>
        <end position="347"/>
    </location>
</feature>
<evidence type="ECO:0000255" key="1">
    <source>
        <dbReference type="HAMAP-Rule" id="MF_00741"/>
    </source>
</evidence>